<organism>
    <name type="scientific">Mesocricetus auratus</name>
    <name type="common">Golden hamster</name>
    <dbReference type="NCBI Taxonomy" id="10036"/>
    <lineage>
        <taxon>Eukaryota</taxon>
        <taxon>Metazoa</taxon>
        <taxon>Chordata</taxon>
        <taxon>Craniata</taxon>
        <taxon>Vertebrata</taxon>
        <taxon>Euteleostomi</taxon>
        <taxon>Mammalia</taxon>
        <taxon>Eutheria</taxon>
        <taxon>Euarchontoglires</taxon>
        <taxon>Glires</taxon>
        <taxon>Rodentia</taxon>
        <taxon>Myomorpha</taxon>
        <taxon>Muroidea</taxon>
        <taxon>Cricetidae</taxon>
        <taxon>Cricetinae</taxon>
        <taxon>Mesocricetus</taxon>
    </lineage>
</organism>
<comment type="function">
    <text evidence="2 5">Transcriptional regulator (By similarity). Acts as a transcriptional activator that binds to purine-rich GAGA sites found in the promoter of many genes including insulin I and II and islet amyloid polypeptide (PubMed:1454839).</text>
</comment>
<comment type="subunit">
    <text evidence="1">Interacts with BPTF.</text>
</comment>
<comment type="subcellular location">
    <subcellularLocation>
        <location>Nucleus</location>
    </subcellularLocation>
</comment>
<comment type="tissue specificity">
    <text>Ubiquitously expressed.</text>
</comment>
<dbReference type="EMBL" id="L06008">
    <property type="status" value="NOT_ANNOTATED_CDS"/>
    <property type="molecule type" value="mRNA"/>
</dbReference>
<dbReference type="PIR" id="B47236">
    <property type="entry name" value="B47236"/>
</dbReference>
<dbReference type="STRING" id="10036.ENSMAUP00000011249"/>
<dbReference type="eggNOG" id="KOG1721">
    <property type="taxonomic scope" value="Eukaryota"/>
</dbReference>
<dbReference type="Proteomes" id="UP000189706">
    <property type="component" value="Unplaced"/>
</dbReference>
<dbReference type="GO" id="GO:0005634">
    <property type="term" value="C:nucleus"/>
    <property type="evidence" value="ECO:0000250"/>
    <property type="project" value="UniProtKB"/>
</dbReference>
<dbReference type="GO" id="GO:0003677">
    <property type="term" value="F:DNA binding"/>
    <property type="evidence" value="ECO:0007669"/>
    <property type="project" value="UniProtKB-KW"/>
</dbReference>
<dbReference type="GO" id="GO:0000981">
    <property type="term" value="F:DNA-binding transcription factor activity, RNA polymerase II-specific"/>
    <property type="evidence" value="ECO:0007669"/>
    <property type="project" value="TreeGrafter"/>
</dbReference>
<dbReference type="GO" id="GO:0008270">
    <property type="term" value="F:zinc ion binding"/>
    <property type="evidence" value="ECO:0007669"/>
    <property type="project" value="UniProtKB-KW"/>
</dbReference>
<dbReference type="GO" id="GO:0000122">
    <property type="term" value="P:negative regulation of transcription by RNA polymerase II"/>
    <property type="evidence" value="ECO:0000250"/>
    <property type="project" value="UniProtKB"/>
</dbReference>
<dbReference type="GO" id="GO:0045944">
    <property type="term" value="P:positive regulation of transcription by RNA polymerase II"/>
    <property type="evidence" value="ECO:0000314"/>
    <property type="project" value="MGI"/>
</dbReference>
<dbReference type="FunFam" id="3.30.160.60:FF:000780">
    <property type="entry name" value="myc-associated zinc finger protein isoform X1"/>
    <property type="match status" value="1"/>
</dbReference>
<dbReference type="FunFam" id="3.30.160.60:FF:000859">
    <property type="entry name" value="myc-associated zinc finger protein isoform X2"/>
    <property type="match status" value="1"/>
</dbReference>
<dbReference type="FunFam" id="3.30.160.60:FF:000095">
    <property type="entry name" value="Vascular endothelial zinc finger 1"/>
    <property type="match status" value="1"/>
</dbReference>
<dbReference type="Gene3D" id="3.30.160.60">
    <property type="entry name" value="Classic Zinc Finger"/>
    <property type="match status" value="3"/>
</dbReference>
<dbReference type="InterPro" id="IPR036236">
    <property type="entry name" value="Znf_C2H2_sf"/>
</dbReference>
<dbReference type="InterPro" id="IPR013087">
    <property type="entry name" value="Znf_C2H2_type"/>
</dbReference>
<dbReference type="PANTHER" id="PTHR24394">
    <property type="entry name" value="ZINC FINGER PROTEIN"/>
    <property type="match status" value="1"/>
</dbReference>
<dbReference type="PANTHER" id="PTHR24394:SF48">
    <property type="entry name" value="ZINC FINGER PROTEIN 771"/>
    <property type="match status" value="1"/>
</dbReference>
<dbReference type="Pfam" id="PF00096">
    <property type="entry name" value="zf-C2H2"/>
    <property type="match status" value="1"/>
</dbReference>
<dbReference type="Pfam" id="PF13894">
    <property type="entry name" value="zf-C2H2_4"/>
    <property type="match status" value="1"/>
</dbReference>
<dbReference type="SMART" id="SM00355">
    <property type="entry name" value="ZnF_C2H2"/>
    <property type="match status" value="3"/>
</dbReference>
<dbReference type="SUPFAM" id="SSF57667">
    <property type="entry name" value="beta-beta-alpha zinc fingers"/>
    <property type="match status" value="2"/>
</dbReference>
<dbReference type="PROSITE" id="PS00028">
    <property type="entry name" value="ZINC_FINGER_C2H2_1"/>
    <property type="match status" value="3"/>
</dbReference>
<dbReference type="PROSITE" id="PS50157">
    <property type="entry name" value="ZINC_FINGER_C2H2_2"/>
    <property type="match status" value="3"/>
</dbReference>
<keyword id="KW-0010">Activator</keyword>
<keyword id="KW-0238">DNA-binding</keyword>
<keyword id="KW-0479">Metal-binding</keyword>
<keyword id="KW-0539">Nucleus</keyword>
<keyword id="KW-1185">Reference proteome</keyword>
<keyword id="KW-0677">Repeat</keyword>
<keyword id="KW-0804">Transcription</keyword>
<keyword id="KW-0805">Transcription regulation</keyword>
<keyword id="KW-0862">Zinc</keyword>
<keyword id="KW-0863">Zinc-finger</keyword>
<reference key="1">
    <citation type="journal article" date="1992" name="Proc. Natl. Acad. Sci. U.S.A.">
        <title>Pur-1, a zinc-finger protein which binds to purine-rich sequences, activates an insulin promoter in heterologous cells.</title>
        <authorList>
            <person name="Kennedy G.C."/>
            <person name="Rutter W.J."/>
        </authorList>
    </citation>
    <scope>NUCLEOTIDE SEQUENCE [MRNA]</scope>
    <scope>FUNCTION</scope>
    <source>
        <tissue>Pancreas</tissue>
    </source>
</reference>
<protein>
    <recommendedName>
        <fullName>Myc-associated zinc finger protein</fullName>
        <shortName>MAZI</shortName>
    </recommendedName>
    <alternativeName>
        <fullName>Pur-1</fullName>
    </alternativeName>
    <alternativeName>
        <fullName>Purine-binding transcription factor</fullName>
    </alternativeName>
</protein>
<sequence>FPVLGLDSRGVGGLMNSFPPPQGHAQNPLQVGAELQSRFFASQGCAQSPFQAAPAPPPTPQAPAAEPLQVDLLPVLAAAQESAAAAAAAAAAAAAVVTAPPAPAAASTVDTAALKQPPAPPPPPPAVSAPAAEAAPPAAAATIAAAAATAVVAPTSTVAVAPVASVLEKKTKSKGPYICALCAKEFKNGYNLRRHEAIHTGAKAGRVPSGAMKMPTMVPLSLLSVPQLSGASGGGGEAGAGGGTTAVAAGGVVTTTASGKRIRKNHACEMCGKAFRDVYHLNRHKLSHSDEKPYQCPVCQQRFKRKDRMSYHVRSHDGAVHKPYNCSHCGK</sequence>
<gene>
    <name type="primary">MAZ</name>
</gene>
<accession>P56670</accession>
<proteinExistence type="evidence at transcript level"/>
<name>MAZ_MESAU</name>
<feature type="chain" id="PRO_0000047216" description="Myc-associated zinc finger protein">
    <location>
        <begin position="1" status="less than"/>
        <end position="331" status="greater than"/>
    </location>
</feature>
<feature type="zinc finger region" description="C2H2-type 1" evidence="3">
    <location>
        <begin position="177"/>
        <end position="199"/>
    </location>
</feature>
<feature type="zinc finger region" description="C2H2-type 2" evidence="3">
    <location>
        <begin position="266"/>
        <end position="288"/>
    </location>
</feature>
<feature type="zinc finger region" description="C2H2-type 3" evidence="3">
    <location>
        <begin position="294"/>
        <end position="316"/>
    </location>
</feature>
<feature type="zinc finger region" description="C2H2-type 4" evidence="3">
    <location>
        <begin position="324"/>
        <end position="331" status="greater than"/>
    </location>
</feature>
<feature type="region of interest" description="Disordered" evidence="4">
    <location>
        <begin position="46"/>
        <end position="65"/>
    </location>
</feature>
<feature type="region of interest" description="Disordered" evidence="4">
    <location>
        <begin position="108"/>
        <end position="131"/>
    </location>
</feature>
<feature type="compositionally biased region" description="Pro residues" evidence="4">
    <location>
        <begin position="117"/>
        <end position="127"/>
    </location>
</feature>
<feature type="non-terminal residue">
    <location>
        <position position="1"/>
    </location>
</feature>
<feature type="non-terminal residue">
    <location>
        <position position="331"/>
    </location>
</feature>
<evidence type="ECO:0000250" key="1"/>
<evidence type="ECO:0000250" key="2">
    <source>
        <dbReference type="UniProtKB" id="P56270"/>
    </source>
</evidence>
<evidence type="ECO:0000255" key="3">
    <source>
        <dbReference type="PROSITE-ProRule" id="PRU00042"/>
    </source>
</evidence>
<evidence type="ECO:0000256" key="4">
    <source>
        <dbReference type="SAM" id="MobiDB-lite"/>
    </source>
</evidence>
<evidence type="ECO:0000269" key="5">
    <source>
    </source>
</evidence>